<dbReference type="EC" id="6.1.1.1" evidence="2"/>
<dbReference type="EMBL" id="L42333">
    <property type="protein sequence ID" value="AAA67122.1"/>
    <property type="molecule type" value="Genomic_DNA"/>
</dbReference>
<dbReference type="EMBL" id="U43281">
    <property type="protein sequence ID" value="AAB68202.1"/>
    <property type="molecule type" value="Genomic_DNA"/>
</dbReference>
<dbReference type="EMBL" id="BK006949">
    <property type="protein sequence ID" value="DAA11335.1"/>
    <property type="molecule type" value="Genomic_DNA"/>
</dbReference>
<dbReference type="PIR" id="S59733">
    <property type="entry name" value="S59733"/>
</dbReference>
<dbReference type="RefSeq" id="NP_015228.1">
    <property type="nucleotide sequence ID" value="NM_001183911.1"/>
</dbReference>
<dbReference type="SMR" id="P48527"/>
<dbReference type="BioGRID" id="36083">
    <property type="interactions" value="31"/>
</dbReference>
<dbReference type="DIP" id="DIP-3826N"/>
<dbReference type="FunCoup" id="P48527">
    <property type="interactions" value="771"/>
</dbReference>
<dbReference type="STRING" id="4932.YPL097W"/>
<dbReference type="PaxDb" id="4932-YPL097W"/>
<dbReference type="PeptideAtlas" id="P48527"/>
<dbReference type="EnsemblFungi" id="YPL097W_mRNA">
    <property type="protein sequence ID" value="YPL097W"/>
    <property type="gene ID" value="YPL097W"/>
</dbReference>
<dbReference type="GeneID" id="856007"/>
<dbReference type="KEGG" id="sce:YPL097W"/>
<dbReference type="AGR" id="SGD:S000006018"/>
<dbReference type="SGD" id="S000006018">
    <property type="gene designation" value="MSY1"/>
</dbReference>
<dbReference type="VEuPathDB" id="FungiDB:YPL097W"/>
<dbReference type="eggNOG" id="KOG2623">
    <property type="taxonomic scope" value="Eukaryota"/>
</dbReference>
<dbReference type="GeneTree" id="ENSGT00390000013709"/>
<dbReference type="HOGENOM" id="CLU_024003_0_0_1"/>
<dbReference type="InParanoid" id="P48527"/>
<dbReference type="OMA" id="YMMAKDS"/>
<dbReference type="OrthoDB" id="337870at2759"/>
<dbReference type="BioCyc" id="YEAST:G3O-34000-MONOMER"/>
<dbReference type="BioGRID-ORCS" id="856007">
    <property type="hits" value="5 hits in 10 CRISPR screens"/>
</dbReference>
<dbReference type="PRO" id="PR:P48527"/>
<dbReference type="Proteomes" id="UP000002311">
    <property type="component" value="Chromosome XVI"/>
</dbReference>
<dbReference type="RNAct" id="P48527">
    <property type="molecule type" value="protein"/>
</dbReference>
<dbReference type="GO" id="GO:0005829">
    <property type="term" value="C:cytosol"/>
    <property type="evidence" value="ECO:0000318"/>
    <property type="project" value="GO_Central"/>
</dbReference>
<dbReference type="GO" id="GO:0005759">
    <property type="term" value="C:mitochondrial matrix"/>
    <property type="evidence" value="ECO:0007669"/>
    <property type="project" value="UniProtKB-SubCell"/>
</dbReference>
<dbReference type="GO" id="GO:0005739">
    <property type="term" value="C:mitochondrion"/>
    <property type="evidence" value="ECO:0000315"/>
    <property type="project" value="SGD"/>
</dbReference>
<dbReference type="GO" id="GO:0005524">
    <property type="term" value="F:ATP binding"/>
    <property type="evidence" value="ECO:0007669"/>
    <property type="project" value="UniProtKB-KW"/>
</dbReference>
<dbReference type="GO" id="GO:0003723">
    <property type="term" value="F:RNA binding"/>
    <property type="evidence" value="ECO:0007669"/>
    <property type="project" value="InterPro"/>
</dbReference>
<dbReference type="GO" id="GO:0004831">
    <property type="term" value="F:tyrosine-tRNA ligase activity"/>
    <property type="evidence" value="ECO:0000316"/>
    <property type="project" value="SGD"/>
</dbReference>
<dbReference type="GO" id="GO:0070184">
    <property type="term" value="P:mitochondrial tyrosyl-tRNA aminoacylation"/>
    <property type="evidence" value="ECO:0000316"/>
    <property type="project" value="SGD"/>
</dbReference>
<dbReference type="GO" id="GO:0043039">
    <property type="term" value="P:tRNA aminoacylation"/>
    <property type="evidence" value="ECO:0000318"/>
    <property type="project" value="GO_Central"/>
</dbReference>
<dbReference type="CDD" id="cd00805">
    <property type="entry name" value="TyrRS_core"/>
    <property type="match status" value="1"/>
</dbReference>
<dbReference type="FunFam" id="1.10.240.10:FF:000001">
    <property type="entry name" value="Tyrosine--tRNA ligase"/>
    <property type="match status" value="1"/>
</dbReference>
<dbReference type="FunFam" id="3.40.50.620:FF:000158">
    <property type="entry name" value="Tyrosine--tRNA ligase"/>
    <property type="match status" value="1"/>
</dbReference>
<dbReference type="Gene3D" id="3.40.50.620">
    <property type="entry name" value="HUPs"/>
    <property type="match status" value="1"/>
</dbReference>
<dbReference type="Gene3D" id="3.10.290.10">
    <property type="entry name" value="RNA-binding S4 domain"/>
    <property type="match status" value="1"/>
</dbReference>
<dbReference type="Gene3D" id="1.10.240.10">
    <property type="entry name" value="Tyrosyl-Transfer RNA Synthetase"/>
    <property type="match status" value="1"/>
</dbReference>
<dbReference type="InterPro" id="IPR001412">
    <property type="entry name" value="aa-tRNA-synth_I_CS"/>
</dbReference>
<dbReference type="InterPro" id="IPR002305">
    <property type="entry name" value="aa-tRNA-synth_Ic"/>
</dbReference>
<dbReference type="InterPro" id="IPR014729">
    <property type="entry name" value="Rossmann-like_a/b/a_fold"/>
</dbReference>
<dbReference type="InterPro" id="IPR036986">
    <property type="entry name" value="S4_RNA-bd_sf"/>
</dbReference>
<dbReference type="InterPro" id="IPR002307">
    <property type="entry name" value="Tyr-tRNA-ligase"/>
</dbReference>
<dbReference type="InterPro" id="IPR024088">
    <property type="entry name" value="Tyr-tRNA-ligase_bac-type"/>
</dbReference>
<dbReference type="NCBIfam" id="TIGR00234">
    <property type="entry name" value="tyrS"/>
    <property type="match status" value="1"/>
</dbReference>
<dbReference type="PANTHER" id="PTHR11766:SF0">
    <property type="entry name" value="TYROSINE--TRNA LIGASE, MITOCHONDRIAL"/>
    <property type="match status" value="1"/>
</dbReference>
<dbReference type="PANTHER" id="PTHR11766">
    <property type="entry name" value="TYROSYL-TRNA SYNTHETASE"/>
    <property type="match status" value="1"/>
</dbReference>
<dbReference type="Pfam" id="PF00579">
    <property type="entry name" value="tRNA-synt_1b"/>
    <property type="match status" value="1"/>
</dbReference>
<dbReference type="PRINTS" id="PR01040">
    <property type="entry name" value="TRNASYNTHTYR"/>
</dbReference>
<dbReference type="SUPFAM" id="SSF55174">
    <property type="entry name" value="Alpha-L RNA-binding motif"/>
    <property type="match status" value="1"/>
</dbReference>
<dbReference type="SUPFAM" id="SSF52374">
    <property type="entry name" value="Nucleotidylyl transferase"/>
    <property type="match status" value="1"/>
</dbReference>
<dbReference type="PROSITE" id="PS00178">
    <property type="entry name" value="AA_TRNA_LIGASE_I"/>
    <property type="match status" value="1"/>
</dbReference>
<gene>
    <name type="primary">MSY1</name>
    <name type="ordered locus">YPL097W</name>
    <name type="ORF">LPG11W</name>
</gene>
<reference key="1">
    <citation type="submission" date="1995-05" db="EMBL/GenBank/DDBJ databases">
        <title>The nuclear gene MSY1 of Saccharomyces cerevisiae codes for mitochondrial tyrosyl-tRNA synthetase.</title>
        <authorList>
            <person name="Hill J.E."/>
            <person name="Tzagoloff A.A."/>
        </authorList>
    </citation>
    <scope>NUCLEOTIDE SEQUENCE [GENOMIC DNA]</scope>
    <source>
        <strain>ATCC 24657 / D273-10B</strain>
    </source>
</reference>
<reference key="2">
    <citation type="journal article" date="1997" name="Nature">
        <title>The nucleotide sequence of Saccharomyces cerevisiae chromosome XVI.</title>
        <authorList>
            <person name="Bussey H."/>
            <person name="Storms R.K."/>
            <person name="Ahmed A."/>
            <person name="Albermann K."/>
            <person name="Allen E."/>
            <person name="Ansorge W."/>
            <person name="Araujo R."/>
            <person name="Aparicio A."/>
            <person name="Barrell B.G."/>
            <person name="Badcock K."/>
            <person name="Benes V."/>
            <person name="Botstein D."/>
            <person name="Bowman S."/>
            <person name="Brueckner M."/>
            <person name="Carpenter J."/>
            <person name="Cherry J.M."/>
            <person name="Chung E."/>
            <person name="Churcher C.M."/>
            <person name="Coster F."/>
            <person name="Davis K."/>
            <person name="Davis R.W."/>
            <person name="Dietrich F.S."/>
            <person name="Delius H."/>
            <person name="DiPaolo T."/>
            <person name="Dubois E."/>
            <person name="Duesterhoeft A."/>
            <person name="Duncan M."/>
            <person name="Floeth M."/>
            <person name="Fortin N."/>
            <person name="Friesen J.D."/>
            <person name="Fritz C."/>
            <person name="Goffeau A."/>
            <person name="Hall J."/>
            <person name="Hebling U."/>
            <person name="Heumann K."/>
            <person name="Hilbert H."/>
            <person name="Hillier L.W."/>
            <person name="Hunicke-Smith S."/>
            <person name="Hyman R.W."/>
            <person name="Johnston M."/>
            <person name="Kalman S."/>
            <person name="Kleine K."/>
            <person name="Komp C."/>
            <person name="Kurdi O."/>
            <person name="Lashkari D."/>
            <person name="Lew H."/>
            <person name="Lin A."/>
            <person name="Lin D."/>
            <person name="Louis E.J."/>
            <person name="Marathe R."/>
            <person name="Messenguy F."/>
            <person name="Mewes H.-W."/>
            <person name="Mirtipati S."/>
            <person name="Moestl D."/>
            <person name="Mueller-Auer S."/>
            <person name="Namath A."/>
            <person name="Nentwich U."/>
            <person name="Oefner P."/>
            <person name="Pearson D."/>
            <person name="Petel F.X."/>
            <person name="Pohl T.M."/>
            <person name="Purnelle B."/>
            <person name="Rajandream M.A."/>
            <person name="Rechmann S."/>
            <person name="Rieger M."/>
            <person name="Riles L."/>
            <person name="Roberts D."/>
            <person name="Schaefer M."/>
            <person name="Scharfe M."/>
            <person name="Scherens B."/>
            <person name="Schramm S."/>
            <person name="Schroeder M."/>
            <person name="Sdicu A.-M."/>
            <person name="Tettelin H."/>
            <person name="Urrestarazu L.A."/>
            <person name="Ushinsky S."/>
            <person name="Vierendeels F."/>
            <person name="Vissers S."/>
            <person name="Voss H."/>
            <person name="Walsh S.V."/>
            <person name="Wambutt R."/>
            <person name="Wang Y."/>
            <person name="Wedler E."/>
            <person name="Wedler H."/>
            <person name="Winnett E."/>
            <person name="Zhong W.-W."/>
            <person name="Zollner A."/>
            <person name="Vo D.H."/>
            <person name="Hani J."/>
        </authorList>
    </citation>
    <scope>NUCLEOTIDE SEQUENCE [LARGE SCALE GENOMIC DNA]</scope>
    <source>
        <strain>ATCC 204508 / S288c</strain>
    </source>
</reference>
<reference key="3">
    <citation type="journal article" date="2014" name="G3 (Bethesda)">
        <title>The reference genome sequence of Saccharomyces cerevisiae: Then and now.</title>
        <authorList>
            <person name="Engel S.R."/>
            <person name="Dietrich F.S."/>
            <person name="Fisk D.G."/>
            <person name="Binkley G."/>
            <person name="Balakrishnan R."/>
            <person name="Costanzo M.C."/>
            <person name="Dwight S.S."/>
            <person name="Hitz B.C."/>
            <person name="Karra K."/>
            <person name="Nash R.S."/>
            <person name="Weng S."/>
            <person name="Wong E.D."/>
            <person name="Lloyd P."/>
            <person name="Skrzypek M.S."/>
            <person name="Miyasato S.R."/>
            <person name="Simison M."/>
            <person name="Cherry J.M."/>
        </authorList>
    </citation>
    <scope>GENOME REANNOTATION</scope>
    <source>
        <strain>ATCC 204508 / S288c</strain>
    </source>
</reference>
<reference key="4">
    <citation type="journal article" date="2003" name="Nature">
        <title>Global analysis of protein localization in budding yeast.</title>
        <authorList>
            <person name="Huh W.-K."/>
            <person name="Falvo J.V."/>
            <person name="Gerke L.C."/>
            <person name="Carroll A.S."/>
            <person name="Howson R.W."/>
            <person name="Weissman J.S."/>
            <person name="O'Shea E.K."/>
        </authorList>
    </citation>
    <scope>SUBCELLULAR LOCATION [LARGE SCALE ANALYSIS]</scope>
</reference>
<reference key="5">
    <citation type="journal article" date="2003" name="Nature">
        <title>Global analysis of protein expression in yeast.</title>
        <authorList>
            <person name="Ghaemmaghami S."/>
            <person name="Huh W.-K."/>
            <person name="Bower K."/>
            <person name="Howson R.W."/>
            <person name="Belle A."/>
            <person name="Dephoure N."/>
            <person name="O'Shea E.K."/>
            <person name="Weissman J.S."/>
        </authorList>
    </citation>
    <scope>LEVEL OF PROTEIN EXPRESSION [LARGE SCALE ANALYSIS]</scope>
</reference>
<reference key="6">
    <citation type="journal article" date="2003" name="Proc. Natl. Acad. Sci. U.S.A.">
        <title>The proteome of Saccharomyces cerevisiae mitochondria.</title>
        <authorList>
            <person name="Sickmann A."/>
            <person name="Reinders J."/>
            <person name="Wagner Y."/>
            <person name="Joppich C."/>
            <person name="Zahedi R.P."/>
            <person name="Meyer H.E."/>
            <person name="Schoenfisch B."/>
            <person name="Perschil I."/>
            <person name="Chacinska A."/>
            <person name="Guiard B."/>
            <person name="Rehling P."/>
            <person name="Pfanner N."/>
            <person name="Meisinger C."/>
        </authorList>
    </citation>
    <scope>SUBCELLULAR LOCATION [LARGE SCALE ANALYSIS]</scope>
    <source>
        <strain>ATCC 76625 / YPH499</strain>
    </source>
</reference>
<organism>
    <name type="scientific">Saccharomyces cerevisiae (strain ATCC 204508 / S288c)</name>
    <name type="common">Baker's yeast</name>
    <dbReference type="NCBI Taxonomy" id="559292"/>
    <lineage>
        <taxon>Eukaryota</taxon>
        <taxon>Fungi</taxon>
        <taxon>Dikarya</taxon>
        <taxon>Ascomycota</taxon>
        <taxon>Saccharomycotina</taxon>
        <taxon>Saccharomycetes</taxon>
        <taxon>Saccharomycetales</taxon>
        <taxon>Saccharomycetaceae</taxon>
        <taxon>Saccharomyces</taxon>
    </lineage>
</organism>
<evidence type="ECO:0000250" key="1"/>
<evidence type="ECO:0000250" key="2">
    <source>
        <dbReference type="UniProtKB" id="Q9Y2Z4"/>
    </source>
</evidence>
<evidence type="ECO:0000255" key="3"/>
<evidence type="ECO:0000269" key="4">
    <source>
    </source>
</evidence>
<evidence type="ECO:0000269" key="5">
    <source>
    </source>
</evidence>
<evidence type="ECO:0000269" key="6">
    <source>
    </source>
</evidence>
<evidence type="ECO:0000305" key="7"/>
<sequence length="492" mass="55287">MLELRSCSNLVNSSRRLVPLVTYSGLSAITLPKSRFYSQPSALEVQGTSDSRSDNILDELKQRGLVSQVSQPESFLRTKLNGNDKIKLYCGVDPTAQSLHLGNLVPLMVLLHFYVKGHDIVTVIGGATGKVGDPSGRKTERDVMENDIRQSNVASISQQLQRFFKNGLEYYRNRCALTEDVPSGKYTPRNNFNWWKDIKMLDFLADFGRHIRVQSMLARDSISSRLQTKNGLGFNEFTYQVLQAYDFYHLYKEENVTIQVGGNDQWGNITAGIDLINRIQPIKNKGLPFGITVPLLTTATGEKFGKSAGNAVFIDPSINTAYDVYQFFYNTLDADVPKFLKIFTFLNSSEIKKIVETHIKSPSLRYGQTLLAKEVTDMLYGVGSGSDSEALSNIIFGRYDGTLSAAKLVDLCKKARILQYADREIDLIKLICKLVNCSVSEARRKLSQGSVYLHHSKSKVNENISNLAPFLIDDRVLILRIGKQKCFIIEMR</sequence>
<name>SYYM_YEAST</name>
<comment type="function">
    <text evidence="2">Catalyzes the attachment of tyrosine to tRNA(Tyr) in a two-step reaction: tyrosine is first activated by ATP to form Tyr-AMP and then transferred to the acceptor end of tRNA(Tyr).</text>
</comment>
<comment type="catalytic activity">
    <reaction evidence="2">
        <text>tRNA(Tyr) + L-tyrosine + ATP = L-tyrosyl-tRNA(Tyr) + AMP + diphosphate + H(+)</text>
        <dbReference type="Rhea" id="RHEA:10220"/>
        <dbReference type="Rhea" id="RHEA-COMP:9706"/>
        <dbReference type="Rhea" id="RHEA-COMP:9707"/>
        <dbReference type="ChEBI" id="CHEBI:15378"/>
        <dbReference type="ChEBI" id="CHEBI:30616"/>
        <dbReference type="ChEBI" id="CHEBI:33019"/>
        <dbReference type="ChEBI" id="CHEBI:58315"/>
        <dbReference type="ChEBI" id="CHEBI:78442"/>
        <dbReference type="ChEBI" id="CHEBI:78536"/>
        <dbReference type="ChEBI" id="CHEBI:456215"/>
        <dbReference type="EC" id="6.1.1.1"/>
    </reaction>
</comment>
<comment type="subunit">
    <text evidence="2">Homodimer.</text>
</comment>
<comment type="subcellular location">
    <subcellularLocation>
        <location evidence="4 6">Mitochondrion matrix</location>
    </subcellularLocation>
</comment>
<comment type="miscellaneous">
    <text evidence="5">Present with 996 molecules/cell in log phase SD medium.</text>
</comment>
<comment type="similarity">
    <text evidence="7">Belongs to the class-I aminoacyl-tRNA synthetase family.</text>
</comment>
<proteinExistence type="evidence at protein level"/>
<keyword id="KW-0030">Aminoacyl-tRNA synthetase</keyword>
<keyword id="KW-0067">ATP-binding</keyword>
<keyword id="KW-0436">Ligase</keyword>
<keyword id="KW-0496">Mitochondrion</keyword>
<keyword id="KW-0547">Nucleotide-binding</keyword>
<keyword id="KW-0648">Protein biosynthesis</keyword>
<keyword id="KW-1185">Reference proteome</keyword>
<keyword id="KW-0809">Transit peptide</keyword>
<protein>
    <recommendedName>
        <fullName>Tyrosine--tRNA ligase, mitochondrial</fullName>
        <ecNumber evidence="2">6.1.1.1</ecNumber>
    </recommendedName>
    <alternativeName>
        <fullName>Tyrosyl-tRNA synthetase</fullName>
        <shortName>TyrRS</shortName>
    </alternativeName>
</protein>
<accession>P48527</accession>
<accession>D6W3R9</accession>
<feature type="transit peptide" description="Mitochondrion" evidence="3">
    <location>
        <begin position="1"/>
        <end status="unknown"/>
    </location>
</feature>
<feature type="chain" id="PRO_0000035835" description="Tyrosine--tRNA ligase, mitochondrial">
    <location>
        <begin status="unknown"/>
        <end position="492"/>
    </location>
</feature>
<feature type="short sequence motif" description="'HIGH' region">
    <location>
        <begin position="94"/>
        <end position="103"/>
    </location>
</feature>
<feature type="short sequence motif" description="'KMSKS' region">
    <location>
        <begin position="303"/>
        <end position="307"/>
    </location>
</feature>
<feature type="binding site" evidence="2">
    <location>
        <position position="89"/>
    </location>
    <ligand>
        <name>L-tyrosine</name>
        <dbReference type="ChEBI" id="CHEBI:58315"/>
    </ligand>
</feature>
<feature type="binding site" evidence="2">
    <location>
        <position position="93"/>
    </location>
    <ligand>
        <name>ATP</name>
        <dbReference type="ChEBI" id="CHEBI:30616"/>
    </ligand>
</feature>
<feature type="binding site" evidence="2">
    <location>
        <position position="133"/>
    </location>
    <ligand>
        <name>L-tyrosine</name>
        <dbReference type="ChEBI" id="CHEBI:58315"/>
    </ligand>
</feature>
<feature type="binding site" evidence="2">
    <location>
        <position position="239"/>
    </location>
    <ligand>
        <name>L-tyrosine</name>
        <dbReference type="ChEBI" id="CHEBI:58315"/>
    </ligand>
</feature>
<feature type="binding site" evidence="2">
    <location>
        <position position="243"/>
    </location>
    <ligand>
        <name>L-tyrosine</name>
        <dbReference type="ChEBI" id="CHEBI:58315"/>
    </ligand>
</feature>
<feature type="binding site" evidence="2">
    <location>
        <position position="246"/>
    </location>
    <ligand>
        <name>L-tyrosine</name>
        <dbReference type="ChEBI" id="CHEBI:58315"/>
    </ligand>
</feature>
<feature type="binding site" evidence="2">
    <location>
        <position position="265"/>
    </location>
    <ligand>
        <name>L-tyrosine</name>
        <dbReference type="ChEBI" id="CHEBI:58315"/>
    </ligand>
</feature>
<feature type="binding site" evidence="1">
    <location>
        <position position="306"/>
    </location>
    <ligand>
        <name>ATP</name>
        <dbReference type="ChEBI" id="CHEBI:30616"/>
    </ligand>
</feature>